<comment type="function">
    <text evidence="6 8 10 13 14">Histone chaperone which acts as a cofactor stimulating histone H3 acetylation by RTT109 (PubMed:17320445, PubMed:19172748, PubMed:21256037, PubMed:29300933, PubMed:31387991). Preferentially stimulates histone H3 'Lys-9' acetylation by RTT109 (PubMed:21256037, PubMed:29300933, PubMed:31387991). May also stimulate histone H3 'Lys-56' acetylation by RTT109 (PubMed:17320445). Assembles nucleosomes (in vitro) (PubMed:19172748).</text>
</comment>
<comment type="subunit">
    <text evidence="5 6 7 8 9 10 11 12 14">Homodimer (PubMed:19172748, PubMed:21256037, PubMed:21454705, PubMed:31387991). Homotetramer (PubMed:27036862). Forms a complex with RTT109; consisting of a VPS75 dimer contacted by two RTT109 subunits (PubMed:17320445, PubMed:18719104, PubMed:20560668, PubMed:21256037, PubMed:21454705, PubMed:31387991). Interacts with RTT109; the interaction is direct (PubMed:17272723, PubMed:17320445, PubMed:18719104, PubMed:20560668, PubMed:21256037, PubMed:31387991). Interacts with ASF1 (PubMed:31387991). Interacts with histone H3/H4 heterodimers and heterotetramers via histone H3 (PubMed:21454705, PubMed:27036862, PubMed:31387991).</text>
</comment>
<comment type="interaction">
    <interactant intactId="EBI-29225">
        <id>P53853</id>
    </interactant>
    <interactant intactId="EBI-2887026">
        <id>Q07794</id>
        <label>RTT109</label>
    </interactant>
    <organismsDiffer>false</organismsDiffer>
    <experiments>21</experiments>
</comment>
<comment type="interaction">
    <interactant intactId="EBI-29225">
        <id>P53853</id>
    </interactant>
    <interactant intactId="EBI-29225">
        <id>P53853</id>
        <label>VPS75</label>
    </interactant>
    <organismsDiffer>false</organismsDiffer>
    <experiments>9</experiments>
</comment>
<comment type="subcellular location">
    <subcellularLocation>
        <location evidence="3">Nucleus</location>
    </subcellularLocation>
</comment>
<comment type="domain">
    <text evidence="14">The C-terminal part interacts with the N-terminal part of histone H3 and promotes acetylation of histone H3 'Lys-9'.</text>
</comment>
<comment type="disruption phenotype">
    <text evidence="2 8 10">Decreases acetylation of histone H3 'Lys-9' and 'Lys-23' (PubMed:19172748). Simultaneous disruption of GCN5 abolishes acetylation of histone H3 'Lys-9' and 'Lys-27' (PubMed:21256037). Abnormal protein sorting to vacuole (PubMed:12134085).</text>
</comment>
<comment type="miscellaneous">
    <text evidence="4">Present with 3120 molecules/cell in log phase SD medium.</text>
</comment>
<comment type="similarity">
    <text evidence="15">Belongs to the nucleosome assembly protein (NAP) family.</text>
</comment>
<evidence type="ECO:0000256" key="1">
    <source>
        <dbReference type="SAM" id="MobiDB-lite"/>
    </source>
</evidence>
<evidence type="ECO:0000269" key="2">
    <source>
    </source>
</evidence>
<evidence type="ECO:0000269" key="3">
    <source>
    </source>
</evidence>
<evidence type="ECO:0000269" key="4">
    <source>
    </source>
</evidence>
<evidence type="ECO:0000269" key="5">
    <source>
    </source>
</evidence>
<evidence type="ECO:0000269" key="6">
    <source>
    </source>
</evidence>
<evidence type="ECO:0000269" key="7">
    <source>
    </source>
</evidence>
<evidence type="ECO:0000269" key="8">
    <source>
    </source>
</evidence>
<evidence type="ECO:0000269" key="9">
    <source>
    </source>
</evidence>
<evidence type="ECO:0000269" key="10">
    <source>
    </source>
</evidence>
<evidence type="ECO:0000269" key="11">
    <source>
    </source>
</evidence>
<evidence type="ECO:0000269" key="12">
    <source>
    </source>
</evidence>
<evidence type="ECO:0000269" key="13">
    <source>
    </source>
</evidence>
<evidence type="ECO:0000269" key="14">
    <source>
    </source>
</evidence>
<evidence type="ECO:0000305" key="15"/>
<evidence type="ECO:0007744" key="16">
    <source>
        <dbReference type="PDB" id="3C9B"/>
    </source>
</evidence>
<evidence type="ECO:0007744" key="17">
    <source>
        <dbReference type="PDB" id="3C9D"/>
    </source>
</evidence>
<evidence type="ECO:0007744" key="18">
    <source>
        <dbReference type="PDB" id="3Q33"/>
    </source>
</evidence>
<evidence type="ECO:0007744" key="19">
    <source>
        <dbReference type="PDB" id="3Q35"/>
    </source>
</evidence>
<evidence type="ECO:0007744" key="20">
    <source>
        <dbReference type="PDB" id="3Q66"/>
    </source>
</evidence>
<evidence type="ECO:0007744" key="21">
    <source>
        <dbReference type="PDB" id="3Q68"/>
    </source>
</evidence>
<evidence type="ECO:0007744" key="22">
    <source>
        <dbReference type="PDB" id="5AGC"/>
    </source>
</evidence>
<evidence type="ECO:0007744" key="23">
    <source>
        <dbReference type="PDB" id="6O22"/>
    </source>
</evidence>
<evidence type="ECO:0007744" key="24">
    <source>
    </source>
</evidence>
<evidence type="ECO:0007829" key="25">
    <source>
        <dbReference type="PDB" id="2ZD7"/>
    </source>
</evidence>
<evidence type="ECO:0007829" key="26">
    <source>
        <dbReference type="PDB" id="3DM7"/>
    </source>
</evidence>
<evidence type="ECO:0007829" key="27">
    <source>
        <dbReference type="PDB" id="3Q66"/>
    </source>
</evidence>
<evidence type="ECO:0007829" key="28">
    <source>
        <dbReference type="PDB" id="3Q68"/>
    </source>
</evidence>
<keyword id="KW-0002">3D-structure</keyword>
<keyword id="KW-0539">Nucleus</keyword>
<keyword id="KW-0597">Phosphoprotein</keyword>
<keyword id="KW-0653">Protein transport</keyword>
<keyword id="KW-1185">Reference proteome</keyword>
<keyword id="KW-0813">Transport</keyword>
<reference key="1">
    <citation type="journal article" date="1997" name="Yeast">
        <title>Sequence analysis of the 33 kb long region between ORC5 and SUI1 from the left arm of chromosome XIV from Saccharomyces cerevisiae.</title>
        <authorList>
            <person name="Sen-Gupta M."/>
            <person name="Gueldener U."/>
            <person name="Beinhauer J.D."/>
            <person name="Fiedler T.A."/>
            <person name="Hegemann J.H."/>
        </authorList>
    </citation>
    <scope>NUCLEOTIDE SEQUENCE [GENOMIC DNA]</scope>
    <source>
        <strain>ATCC 96604 / S288c / FY1679</strain>
    </source>
</reference>
<reference key="2">
    <citation type="journal article" date="1997" name="Nature">
        <title>The nucleotide sequence of Saccharomyces cerevisiae chromosome XIV and its evolutionary implications.</title>
        <authorList>
            <person name="Philippsen P."/>
            <person name="Kleine K."/>
            <person name="Poehlmann R."/>
            <person name="Duesterhoeft A."/>
            <person name="Hamberg K."/>
            <person name="Hegemann J.H."/>
            <person name="Obermaier B."/>
            <person name="Urrestarazu L.A."/>
            <person name="Aert R."/>
            <person name="Albermann K."/>
            <person name="Altmann R."/>
            <person name="Andre B."/>
            <person name="Baladron V."/>
            <person name="Ballesta J.P.G."/>
            <person name="Becam A.-M."/>
            <person name="Beinhauer J.D."/>
            <person name="Boskovic J."/>
            <person name="Buitrago M.J."/>
            <person name="Bussereau F."/>
            <person name="Coster F."/>
            <person name="Crouzet M."/>
            <person name="D'Angelo M."/>
            <person name="Dal Pero F."/>
            <person name="De Antoni A."/>
            <person name="del Rey F."/>
            <person name="Doignon F."/>
            <person name="Domdey H."/>
            <person name="Dubois E."/>
            <person name="Fiedler T.A."/>
            <person name="Fleig U."/>
            <person name="Floeth M."/>
            <person name="Fritz C."/>
            <person name="Gaillardin C."/>
            <person name="Garcia-Cantalejo J.M."/>
            <person name="Glansdorff N."/>
            <person name="Goffeau A."/>
            <person name="Gueldener U."/>
            <person name="Herbert C.J."/>
            <person name="Heumann K."/>
            <person name="Heuss-Neitzel D."/>
            <person name="Hilbert H."/>
            <person name="Hinni K."/>
            <person name="Iraqui Houssaini I."/>
            <person name="Jacquet M."/>
            <person name="Jimenez A."/>
            <person name="Jonniaux J.-L."/>
            <person name="Karpfinger-Hartl L."/>
            <person name="Lanfranchi G."/>
            <person name="Lepingle A."/>
            <person name="Levesque H."/>
            <person name="Lyck R."/>
            <person name="Maftahi M."/>
            <person name="Mallet L."/>
            <person name="Maurer C.T.C."/>
            <person name="Messenguy F."/>
            <person name="Mewes H.-W."/>
            <person name="Moestl D."/>
            <person name="Nasr F."/>
            <person name="Nicaud J.-M."/>
            <person name="Niedenthal R.K."/>
            <person name="Pandolfo D."/>
            <person name="Pierard A."/>
            <person name="Piravandi E."/>
            <person name="Planta R.J."/>
            <person name="Pohl T.M."/>
            <person name="Purnelle B."/>
            <person name="Rebischung C."/>
            <person name="Remacha M.A."/>
            <person name="Revuelta J.L."/>
            <person name="Rinke M."/>
            <person name="Saiz J.E."/>
            <person name="Sartorello F."/>
            <person name="Scherens B."/>
            <person name="Sen-Gupta M."/>
            <person name="Soler-Mira A."/>
            <person name="Urbanus J.H.M."/>
            <person name="Valle G."/>
            <person name="Van Dyck L."/>
            <person name="Verhasselt P."/>
            <person name="Vierendeels F."/>
            <person name="Vissers S."/>
            <person name="Voet M."/>
            <person name="Volckaert G."/>
            <person name="Wach A."/>
            <person name="Wambutt R."/>
            <person name="Wedler H."/>
            <person name="Zollner A."/>
            <person name="Hani J."/>
        </authorList>
    </citation>
    <scope>NUCLEOTIDE SEQUENCE [LARGE SCALE GENOMIC DNA]</scope>
    <source>
        <strain>ATCC 204508 / S288c</strain>
    </source>
</reference>
<reference key="3">
    <citation type="journal article" date="2014" name="G3 (Bethesda)">
        <title>The reference genome sequence of Saccharomyces cerevisiae: Then and now.</title>
        <authorList>
            <person name="Engel S.R."/>
            <person name="Dietrich F.S."/>
            <person name="Fisk D.G."/>
            <person name="Binkley G."/>
            <person name="Balakrishnan R."/>
            <person name="Costanzo M.C."/>
            <person name="Dwight S.S."/>
            <person name="Hitz B.C."/>
            <person name="Karra K."/>
            <person name="Nash R.S."/>
            <person name="Weng S."/>
            <person name="Wong E.D."/>
            <person name="Lloyd P."/>
            <person name="Skrzypek M.S."/>
            <person name="Miyasato S.R."/>
            <person name="Simison M."/>
            <person name="Cherry J.M."/>
        </authorList>
    </citation>
    <scope>GENOME REANNOTATION</scope>
    <source>
        <strain>ATCC 204508 / S288c</strain>
    </source>
</reference>
<reference key="4">
    <citation type="journal article" date="2002" name="Mol. Biol. Cell">
        <title>Genomic screen for vacuolar protein sorting genes in Saccharomyces cerevisiae.</title>
        <authorList>
            <person name="Bonangelino C.J."/>
            <person name="Chavez E.M."/>
            <person name="Bonifacino J.S."/>
        </authorList>
    </citation>
    <scope>DISRUPTION PHENOTYPE</scope>
</reference>
<reference key="5">
    <citation type="journal article" date="2003" name="Nature">
        <title>Global analysis of protein localization in budding yeast.</title>
        <authorList>
            <person name="Huh W.-K."/>
            <person name="Falvo J.V."/>
            <person name="Gerke L.C."/>
            <person name="Carroll A.S."/>
            <person name="Howson R.W."/>
            <person name="Weissman J.S."/>
            <person name="O'Shea E.K."/>
        </authorList>
    </citation>
    <scope>SUBCELLULAR LOCATION [LARGE SCALE ANALYSIS]</scope>
</reference>
<reference key="6">
    <citation type="journal article" date="2003" name="Nature">
        <title>Global analysis of protein expression in yeast.</title>
        <authorList>
            <person name="Ghaemmaghami S."/>
            <person name="Huh W.-K."/>
            <person name="Bower K."/>
            <person name="Howson R.W."/>
            <person name="Belle A."/>
            <person name="Dephoure N."/>
            <person name="O'Shea E.K."/>
            <person name="Weissman J.S."/>
        </authorList>
    </citation>
    <scope>LEVEL OF PROTEIN EXPRESSION [LARGE SCALE ANALYSIS]</scope>
</reference>
<reference key="7">
    <citation type="journal article" date="2007" name="Mol. Cell">
        <title>Histone H3-K56 acetylation is catalyzed by histone chaperone-dependent complexes.</title>
        <authorList>
            <person name="Tsubota T."/>
            <person name="Berndsen C.E."/>
            <person name="Erkmann J.A."/>
            <person name="Smith C.L."/>
            <person name="Yang L."/>
            <person name="Freitas M.A."/>
            <person name="Denu J.M."/>
            <person name="Kaufman P.D."/>
        </authorList>
    </citation>
    <scope>FUNCTION</scope>
    <scope>IDENTIFICATION IN A COMPLEX WITH RTT109</scope>
    <scope>INTERACTION WITH RTT109</scope>
</reference>
<reference key="8">
    <citation type="journal article" date="2007" name="Science">
        <title>Rtt109 acetylates histone H3 lysine 56 and functions in DNA replication.</title>
        <authorList>
            <person name="Han J."/>
            <person name="Zhou H."/>
            <person name="Horazdovsky B."/>
            <person name="Zhang K."/>
            <person name="Xu R.-M."/>
            <person name="Zhang Z."/>
        </authorList>
    </citation>
    <scope>INTERACTION WITH RTT109</scope>
</reference>
<reference key="9">
    <citation type="journal article" date="2008" name="Mol. Cell. Proteomics">
        <title>A multidimensional chromatography technology for in-depth phosphoproteome analysis.</title>
        <authorList>
            <person name="Albuquerque C.P."/>
            <person name="Smolka M.B."/>
            <person name="Payne S.H."/>
            <person name="Bafna V."/>
            <person name="Eng J."/>
            <person name="Zhou H."/>
        </authorList>
    </citation>
    <scope>PHOSPHORYLATION [LARGE SCALE ANALYSIS] AT SER-3</scope>
    <scope>IDENTIFICATION BY MASS SPECTROMETRY [LARGE SCALE ANALYSIS]</scope>
</reference>
<reference key="10">
    <citation type="journal article" date="2008" name="Proc. Natl. Acad. Sci. U.S.A.">
        <title>Molecular basis for the autoregulation of the protein acetyl transferase Rtt109.</title>
        <authorList>
            <person name="Stavropoulos P."/>
            <person name="Nagy V."/>
            <person name="Blobel G."/>
            <person name="Hoelz A."/>
        </authorList>
    </citation>
    <scope>IDENTIFICATION IN A COMPLEX WITH RTT109</scope>
    <scope>INTERACTION WITH RTT109</scope>
</reference>
<reference key="11">
    <citation type="journal article" date="2010" name="Biochemistry">
        <title>Kinetic mechanism of the Rtt109-Vps75 histone acetyltransferase-chaperone complex.</title>
        <authorList>
            <person name="Albaugh B.N."/>
            <person name="Kolonko E.M."/>
            <person name="Denu J.M."/>
        </authorList>
    </citation>
    <scope>IDENTIFICATION IN A COMPLEX WITH RTT109</scope>
    <scope>INTERACTION WITH RTT109</scope>
</reference>
<reference key="12">
    <citation type="journal article" date="2018" name="Nucleic Acids Res.">
        <title>Structural characterization of the Asf1-Rtt109 interaction and its role in histone acetylation.</title>
        <authorList>
            <person name="Lercher L."/>
            <person name="Danilenko N."/>
            <person name="Kirkpatrick J."/>
            <person name="Carlomagno T."/>
        </authorList>
    </citation>
    <scope>FUNCTION</scope>
</reference>
<reference evidence="16 17" key="13">
    <citation type="journal article" date="2008" name="Nat. Struct. Mol. Biol.">
        <title>Molecular functions of the histone acetyltransferase chaperone complex Rtt109-Vps75.</title>
        <authorList>
            <person name="Berndsen C.E."/>
            <person name="Tsubota T."/>
            <person name="Lindner S.E."/>
            <person name="Lee S."/>
            <person name="Holton J.M."/>
            <person name="Kaufman P.D."/>
            <person name="Keck J.L."/>
            <person name="Denu J.M."/>
        </authorList>
    </citation>
    <scope>X-RAY CRYSTALLOGRAPHY (2.00 ANGSTROMS) OF 1-259</scope>
    <scope>FUNCTION</scope>
    <scope>SUBUNIT</scope>
    <scope>DISRUPTION PHENOTYPE</scope>
    <scope>MUTAGENESIS OF 21-CYS--VAL-32 AND 205-SER--GLU-207</scope>
</reference>
<reference evidence="20 21" key="14">
    <citation type="journal article" date="2011" name="J. Biol. Chem.">
        <title>Structure and histone binding properties of the Vps75-Rtt109 chaperone-lysine acetyltransferase complex.</title>
        <authorList>
            <person name="Su D."/>
            <person name="Hu Q."/>
            <person name="Zhou H."/>
            <person name="Thompson J.R."/>
            <person name="Xu R.M."/>
            <person name="Zhang Z."/>
            <person name="Mer G."/>
        </authorList>
    </citation>
    <scope>X-RAY CRYSTALLOGRAPHY (2.71 ANGSTROMS) OF 2-231 AND 9-225 IN COMPLEX WITH RTT109</scope>
    <scope>SUBUNIT</scope>
    <scope>INTERACTION WITH RTT109 AND HISTONE H3/H4 HETERODIMERS</scope>
</reference>
<reference evidence="18 19" key="15">
    <citation type="journal article" date="2011" name="Structure">
        <title>Structure of the Rtt109-AcCoA/Vps75 complex and implications for chaperone-mediated histone acetylation.</title>
        <authorList>
            <person name="Tang Y."/>
            <person name="Holbert M.A."/>
            <person name="Delgoshaie N."/>
            <person name="Wurtele H."/>
            <person name="Guillemette B."/>
            <person name="Meeth K."/>
            <person name="Yuan H."/>
            <person name="Drogaris P."/>
            <person name="Lee E.H."/>
            <person name="Durette C."/>
            <person name="Thibault P."/>
            <person name="Verreault A."/>
            <person name="Cole P.A."/>
            <person name="Marmorstein R."/>
        </authorList>
    </citation>
    <scope>X-RAY CRYSTALLOGRAPHY (2.80 ANGSTROMS) OF 9-130 AND 136-226 IN COMPLEX WITH RTT109</scope>
    <scope>FUNCTION</scope>
    <scope>SUBUNIT</scope>
    <scope>INTERACTION WITH RTT109</scope>
    <scope>DISRUPTION PHENOTYPE</scope>
    <scope>MUTAGENESIS OF ALA-19; 21-CYS--VAL-32; 73-ARG-ALA-74; 167-GLU--THR-178; 173-ARG--LYS-177; 206-GLU-GLU-207; 218-GLU--ASP-222 AND 233-SER--VAL-264</scope>
</reference>
<reference evidence="22" key="16">
    <citation type="journal article" date="2016" name="Nucleic Acids Res.">
        <title>The histone chaperone Vps75 forms multiple oligomeric assemblies capable of mediating exchange between histone H3-H4 tetramers and Asf1-H3-H4 complexes.</title>
        <authorList>
            <person name="Hammond C.M."/>
            <person name="Sundaramoorthy R."/>
            <person name="Larance M."/>
            <person name="Lamond A."/>
            <person name="Stevens M.A."/>
            <person name="El-Mkami H."/>
            <person name="Norman D.G."/>
            <person name="Owen-Hughes T."/>
        </authorList>
    </citation>
    <scope>X-RAY CRYSTALLOGRAPHY (4.00 ANGSTROMS)</scope>
    <scope>SUBUNIT</scope>
    <scope>INTERACTION WITH HISTONE H3/H4 HETERODIMERS AND HETEROTETRAMERS</scope>
</reference>
<reference evidence="23" key="17">
    <citation type="journal article" date="2019" name="Nat. Commun.">
        <title>Histone chaperone exploits intrinsic disorder to switch acetylation specificity.</title>
        <authorList>
            <person name="Danilenko N."/>
            <person name="Lercher L."/>
            <person name="Kirkpatrick J."/>
            <person name="Gabel F."/>
            <person name="Codutti L."/>
            <person name="Carlomagno T."/>
        </authorList>
    </citation>
    <scope>STRUCTURE BY NMR IN COMPLEX WITH RTT109 AND ASF1</scope>
    <scope>FUNCTION</scope>
    <scope>SUBUNIT</scope>
    <scope>INTERACTION WITH RTT109; ASF1 AND HISTONE H3/H4 HETERODIMERS</scope>
    <scope>DOMAIN</scope>
    <scope>MUTAGENESIS OF 206-GLU-GLU-207</scope>
</reference>
<sequence>MMSDQENENEHAKAFLGLAKCEEEVDAIEREVELYRLNKMKPVYEKRDAYIDEIAEFWKIVLSQHVSFANYIRASDFKYIDTIDKIKVEWLALESEMYDTRDFSITFHFHGIEGDFKEQQVTKVFQIKKGKDDQEDGILTSEPVPIEWPQSYDSINPDLIKDKRSPEGKKKYRQGMKTIFGWFRWTGLKPGKEFPHGDSLASLFSEEIYPFCVKYYAEAQRDLEDEEGESGLSADGDSEDDDGSLGEVDLPLSDEEPSSKKRKV</sequence>
<protein>
    <recommendedName>
        <fullName>Vacuolar protein sorting-associated protein 75</fullName>
    </recommendedName>
</protein>
<dbReference type="EMBL" id="Z71522">
    <property type="protein sequence ID" value="CAA96152.1"/>
    <property type="molecule type" value="Genomic_DNA"/>
</dbReference>
<dbReference type="EMBL" id="BK006947">
    <property type="protein sequence ID" value="DAA10313.1"/>
    <property type="molecule type" value="Genomic_DNA"/>
</dbReference>
<dbReference type="PIR" id="S63214">
    <property type="entry name" value="S63214"/>
</dbReference>
<dbReference type="RefSeq" id="NP_014153.1">
    <property type="nucleotide sequence ID" value="NM_001183084.1"/>
</dbReference>
<dbReference type="PDB" id="2ZD7">
    <property type="method" value="X-ray"/>
    <property type="resolution" value="1.85 A"/>
    <property type="chains" value="A/B=1-264"/>
</dbReference>
<dbReference type="PDB" id="3C9B">
    <property type="method" value="X-ray"/>
    <property type="resolution" value="2.42 A"/>
    <property type="chains" value="A/B=1-259"/>
</dbReference>
<dbReference type="PDB" id="3C9D">
    <property type="method" value="X-ray"/>
    <property type="resolution" value="2.00 A"/>
    <property type="chains" value="A/B=1-259"/>
</dbReference>
<dbReference type="PDB" id="3DM7">
    <property type="method" value="X-ray"/>
    <property type="resolution" value="2.00 A"/>
    <property type="chains" value="A/B=1-232"/>
</dbReference>
<dbReference type="PDB" id="3Q33">
    <property type="method" value="X-ray"/>
    <property type="resolution" value="2.80 A"/>
    <property type="chains" value="B=1-232"/>
</dbReference>
<dbReference type="PDB" id="3Q35">
    <property type="method" value="X-ray"/>
    <property type="resolution" value="3.30 A"/>
    <property type="chains" value="B=1-232"/>
</dbReference>
<dbReference type="PDB" id="3Q66">
    <property type="method" value="X-ray"/>
    <property type="resolution" value="2.70 A"/>
    <property type="chains" value="A/B=1-264"/>
</dbReference>
<dbReference type="PDB" id="3Q68">
    <property type="method" value="X-ray"/>
    <property type="resolution" value="2.70 A"/>
    <property type="chains" value="A/B=1-264"/>
</dbReference>
<dbReference type="PDB" id="5AGC">
    <property type="method" value="X-ray"/>
    <property type="resolution" value="4.00 A"/>
    <property type="chains" value="A/B/C/D=1-264"/>
</dbReference>
<dbReference type="PDB" id="6O22">
    <property type="method" value="Other"/>
    <property type="chains" value="A/B=1-264"/>
</dbReference>
<dbReference type="PDBsum" id="2ZD7"/>
<dbReference type="PDBsum" id="3C9B"/>
<dbReference type="PDBsum" id="3C9D"/>
<dbReference type="PDBsum" id="3DM7"/>
<dbReference type="PDBsum" id="3Q33"/>
<dbReference type="PDBsum" id="3Q35"/>
<dbReference type="PDBsum" id="3Q66"/>
<dbReference type="PDBsum" id="3Q68"/>
<dbReference type="PDBsum" id="5AGC"/>
<dbReference type="PDBsum" id="6O22"/>
<dbReference type="SASBDB" id="P53853"/>
<dbReference type="SMR" id="P53853"/>
<dbReference type="BioGRID" id="35593">
    <property type="interactions" value="135"/>
</dbReference>
<dbReference type="ComplexPortal" id="CPX-1333">
    <property type="entry name" value="RTT109-VPS75 histone acetyltransferase complex"/>
</dbReference>
<dbReference type="DIP" id="DIP-3896N"/>
<dbReference type="FunCoup" id="P53853">
    <property type="interactions" value="745"/>
</dbReference>
<dbReference type="IntAct" id="P53853">
    <property type="interactions" value="5"/>
</dbReference>
<dbReference type="MINT" id="P53853"/>
<dbReference type="STRING" id="4932.YNL246W"/>
<dbReference type="iPTMnet" id="P53853"/>
<dbReference type="PaxDb" id="4932-YNL246W"/>
<dbReference type="PeptideAtlas" id="P53853"/>
<dbReference type="EnsemblFungi" id="YNL246W_mRNA">
    <property type="protein sequence ID" value="YNL246W"/>
    <property type="gene ID" value="YNL246W"/>
</dbReference>
<dbReference type="GeneID" id="855475"/>
<dbReference type="KEGG" id="sce:YNL246W"/>
<dbReference type="AGR" id="SGD:S000005190"/>
<dbReference type="SGD" id="S000005190">
    <property type="gene designation" value="VPS75"/>
</dbReference>
<dbReference type="VEuPathDB" id="FungiDB:YNL246W"/>
<dbReference type="eggNOG" id="KOG1508">
    <property type="taxonomic scope" value="Eukaryota"/>
</dbReference>
<dbReference type="GeneTree" id="ENSGT00940000169229"/>
<dbReference type="HOGENOM" id="CLU_072852_0_0_1"/>
<dbReference type="InParanoid" id="P53853"/>
<dbReference type="OMA" id="PGKEFPN"/>
<dbReference type="OrthoDB" id="19419at2759"/>
<dbReference type="BioCyc" id="YEAST:G3O-33243-MONOMER"/>
<dbReference type="BioGRID-ORCS" id="855475">
    <property type="hits" value="0 hits in 10 CRISPR screens"/>
</dbReference>
<dbReference type="EvolutionaryTrace" id="P53853"/>
<dbReference type="PRO" id="PR:P53853"/>
<dbReference type="Proteomes" id="UP000002311">
    <property type="component" value="Chromosome XIV"/>
</dbReference>
<dbReference type="RNAct" id="P53853">
    <property type="molecule type" value="protein"/>
</dbReference>
<dbReference type="GO" id="GO:0000785">
    <property type="term" value="C:chromatin"/>
    <property type="evidence" value="ECO:0000314"/>
    <property type="project" value="SGD"/>
</dbReference>
<dbReference type="GO" id="GO:0005829">
    <property type="term" value="C:cytosol"/>
    <property type="evidence" value="ECO:0000314"/>
    <property type="project" value="SGD"/>
</dbReference>
<dbReference type="GO" id="GO:0070775">
    <property type="term" value="C:H3 histone acetyltransferase complex"/>
    <property type="evidence" value="ECO:0000314"/>
    <property type="project" value="UniProtKB"/>
</dbReference>
<dbReference type="GO" id="GO:0005634">
    <property type="term" value="C:nucleus"/>
    <property type="evidence" value="ECO:0000314"/>
    <property type="project" value="SGD"/>
</dbReference>
<dbReference type="GO" id="GO:0010698">
    <property type="term" value="F:acetyltransferase activator activity"/>
    <property type="evidence" value="ECO:0000314"/>
    <property type="project" value="UniProtKB"/>
</dbReference>
<dbReference type="GO" id="GO:0003682">
    <property type="term" value="F:chromatin binding"/>
    <property type="evidence" value="ECO:0000318"/>
    <property type="project" value="GO_Central"/>
</dbReference>
<dbReference type="GO" id="GO:0042393">
    <property type="term" value="F:histone binding"/>
    <property type="evidence" value="ECO:0000314"/>
    <property type="project" value="SGD"/>
</dbReference>
<dbReference type="GO" id="GO:0042802">
    <property type="term" value="F:identical protein binding"/>
    <property type="evidence" value="ECO:0000353"/>
    <property type="project" value="IntAct"/>
</dbReference>
<dbReference type="GO" id="GO:0006303">
    <property type="term" value="P:double-strand break repair via nonhomologous end joining"/>
    <property type="evidence" value="ECO:0000315"/>
    <property type="project" value="SGD"/>
</dbReference>
<dbReference type="GO" id="GO:0006334">
    <property type="term" value="P:nucleosome assembly"/>
    <property type="evidence" value="ECO:0000314"/>
    <property type="project" value="UniProtKB"/>
</dbReference>
<dbReference type="GO" id="GO:0036211">
    <property type="term" value="P:protein modification process"/>
    <property type="evidence" value="ECO:0000314"/>
    <property type="project" value="UniProtKB"/>
</dbReference>
<dbReference type="GO" id="GO:0015031">
    <property type="term" value="P:protein transport"/>
    <property type="evidence" value="ECO:0007669"/>
    <property type="project" value="UniProtKB-KW"/>
</dbReference>
<dbReference type="DisProt" id="DP02908"/>
<dbReference type="Gene3D" id="3.30.1120.90">
    <property type="entry name" value="Nucleosome assembly protein"/>
    <property type="match status" value="1"/>
</dbReference>
<dbReference type="IDEAL" id="IID50212"/>
<dbReference type="InterPro" id="IPR037231">
    <property type="entry name" value="NAP-like_sf"/>
</dbReference>
<dbReference type="InterPro" id="IPR002164">
    <property type="entry name" value="NAP_family"/>
</dbReference>
<dbReference type="PANTHER" id="PTHR11875">
    <property type="entry name" value="TESTIS-SPECIFIC Y-ENCODED PROTEIN"/>
    <property type="match status" value="1"/>
</dbReference>
<dbReference type="Pfam" id="PF00956">
    <property type="entry name" value="NAP"/>
    <property type="match status" value="1"/>
</dbReference>
<dbReference type="SUPFAM" id="SSF143113">
    <property type="entry name" value="NAP-like"/>
    <property type="match status" value="1"/>
</dbReference>
<proteinExistence type="evidence at protein level"/>
<organism>
    <name type="scientific">Saccharomyces cerevisiae (strain ATCC 204508 / S288c)</name>
    <name type="common">Baker's yeast</name>
    <dbReference type="NCBI Taxonomy" id="559292"/>
    <lineage>
        <taxon>Eukaryota</taxon>
        <taxon>Fungi</taxon>
        <taxon>Dikarya</taxon>
        <taxon>Ascomycota</taxon>
        <taxon>Saccharomycotina</taxon>
        <taxon>Saccharomycetes</taxon>
        <taxon>Saccharomycetales</taxon>
        <taxon>Saccharomycetaceae</taxon>
        <taxon>Saccharomyces</taxon>
    </lineage>
</organism>
<name>VPS75_YEAST</name>
<feature type="chain" id="PRO_0000185675" description="Vacuolar protein sorting-associated protein 75">
    <location>
        <begin position="1"/>
        <end position="264"/>
    </location>
</feature>
<feature type="region of interest" description="Disordered" evidence="1">
    <location>
        <begin position="223"/>
        <end position="264"/>
    </location>
</feature>
<feature type="modified residue" description="Phosphoserine" evidence="24">
    <location>
        <position position="3"/>
    </location>
</feature>
<feature type="mutagenesis site" description="Decreases RTT109 binding." evidence="10">
    <original>A</original>
    <variation>D</variation>
    <location>
        <position position="19"/>
    </location>
</feature>
<feature type="mutagenesis site" description="Mildly decreases RTT109 activity stimulation." evidence="10">
    <original>A</original>
    <variation>I</variation>
    <location>
        <position position="19"/>
    </location>
</feature>
<feature type="mutagenesis site" description="Abolishes dimer formation. Decreases activity and binding to RTT109." evidence="8 10">
    <original>CEEEVDAIEREV</original>
    <variation>EEEESDAEEREE</variation>
    <location>
        <begin position="21"/>
        <end position="32"/>
    </location>
</feature>
<feature type="mutagenesis site" description="Decreases RTT109 binding and activity stimulation." evidence="10">
    <original>RA</original>
    <variation>DD</variation>
    <location>
        <begin position="73"/>
        <end position="74"/>
    </location>
</feature>
<feature type="mutagenesis site" description="Decreases RTT109 activity stimulation." evidence="10">
    <location>
        <begin position="167"/>
        <end position="178"/>
    </location>
</feature>
<feature type="mutagenesis site" description="Decreases RTT109 binding and activity stimulation." evidence="10">
    <original>RQGMK</original>
    <variation>EQGME</variation>
    <location>
        <begin position="173"/>
        <end position="177"/>
    </location>
</feature>
<feature type="mutagenesis site" description="Decreases RTT109 activity stimulation." evidence="8">
    <original>SEE</original>
    <variation>AAA</variation>
    <location>
        <begin position="205"/>
        <end position="207"/>
    </location>
</feature>
<feature type="mutagenesis site" description="Increases acetylation of histone H3 'Lys-56'." evidence="14">
    <original>EE</original>
    <variation>AA</variation>
    <location>
        <begin position="206"/>
        <end position="207"/>
    </location>
</feature>
<feature type="mutagenesis site" description="Decreases RTT109 activity stimulation." evidence="10">
    <original>EE</original>
    <variation>KK</variation>
    <location>
        <begin position="206"/>
        <end position="207"/>
    </location>
</feature>
<feature type="mutagenesis site" description="Decreases RTT109 binding and activity stimulation." evidence="10">
    <original>EAQRD</original>
    <variation>KAQRK</variation>
    <location>
        <begin position="218"/>
        <end position="222"/>
    </location>
</feature>
<feature type="mutagenesis site" description="Decreases RTT109 activity stimulation." evidence="10">
    <location>
        <begin position="233"/>
        <end position="264"/>
    </location>
</feature>
<feature type="helix" evidence="25">
    <location>
        <begin position="7"/>
        <end position="51"/>
    </location>
</feature>
<feature type="helix" evidence="25">
    <location>
        <begin position="57"/>
        <end position="64"/>
    </location>
</feature>
<feature type="strand" evidence="26">
    <location>
        <begin position="65"/>
        <end position="67"/>
    </location>
</feature>
<feature type="helix" evidence="25">
    <location>
        <begin position="68"/>
        <end position="71"/>
    </location>
</feature>
<feature type="helix" evidence="25">
    <location>
        <begin position="74"/>
        <end position="76"/>
    </location>
</feature>
<feature type="helix" evidence="25">
    <location>
        <begin position="77"/>
        <end position="80"/>
    </location>
</feature>
<feature type="strand" evidence="25">
    <location>
        <begin position="83"/>
        <end position="90"/>
    </location>
</feature>
<feature type="helix" evidence="25">
    <location>
        <begin position="91"/>
        <end position="93"/>
    </location>
</feature>
<feature type="strand" evidence="25">
    <location>
        <begin position="103"/>
        <end position="109"/>
    </location>
</feature>
<feature type="turn" evidence="25">
    <location>
        <begin position="113"/>
        <end position="115"/>
    </location>
</feature>
<feature type="strand" evidence="25">
    <location>
        <begin position="119"/>
        <end position="128"/>
    </location>
</feature>
<feature type="strand" evidence="25">
    <location>
        <begin position="131"/>
        <end position="133"/>
    </location>
</feature>
<feature type="strand" evidence="25">
    <location>
        <begin position="138"/>
        <end position="141"/>
    </location>
</feature>
<feature type="helix" evidence="25">
    <location>
        <begin position="150"/>
        <end position="155"/>
    </location>
</feature>
<feature type="turn" evidence="25">
    <location>
        <begin position="157"/>
        <end position="159"/>
    </location>
</feature>
<feature type="strand" evidence="25">
    <location>
        <begin position="163"/>
        <end position="165"/>
    </location>
</feature>
<feature type="helix" evidence="25">
    <location>
        <begin position="166"/>
        <end position="176"/>
    </location>
</feature>
<feature type="helix" evidence="25">
    <location>
        <begin position="179"/>
        <end position="182"/>
    </location>
</feature>
<feature type="strand" evidence="25">
    <location>
        <begin position="187"/>
        <end position="189"/>
    </location>
</feature>
<feature type="strand" evidence="25">
    <location>
        <begin position="192"/>
        <end position="194"/>
    </location>
</feature>
<feature type="helix" evidence="25">
    <location>
        <begin position="197"/>
        <end position="206"/>
    </location>
</feature>
<feature type="helix" evidence="25">
    <location>
        <begin position="208"/>
        <end position="221"/>
    </location>
</feature>
<feature type="helix" evidence="27">
    <location>
        <begin position="224"/>
        <end position="226"/>
    </location>
</feature>
<feature type="turn" evidence="28">
    <location>
        <begin position="227"/>
        <end position="230"/>
    </location>
</feature>
<accession>P53853</accession>
<accession>D6W0U7</accession>
<gene>
    <name type="primary">VPS75</name>
    <name type="ordered locus">YNL246W</name>
    <name type="ORF">N0890</name>
</gene>